<keyword id="KW-0963">Cytoplasm</keyword>
<keyword id="KW-0396">Initiation factor</keyword>
<keyword id="KW-0539">Nucleus</keyword>
<keyword id="KW-0648">Protein biosynthesis</keyword>
<keyword id="KW-0690">Ribosome biogenesis</keyword>
<feature type="chain" id="PRO_0000153740" description="Eukaryotic translation initiation factor 6">
    <location>
        <begin position="1"/>
        <end position="193" status="greater than"/>
    </location>
</feature>
<feature type="non-terminal residue">
    <location>
        <position position="193"/>
    </location>
</feature>
<comment type="function">
    <text evidence="1">Binds to the 60S ribosomal subunit and prevents its association with the 40S ribosomal subunit to form the 80S initiation complex in the cytoplasm. May also be involved in ribosome biogenesis.</text>
</comment>
<comment type="subunit">
    <text evidence="1">Monomer. Associates with the 60S ribosomal subunit.</text>
</comment>
<comment type="subcellular location">
    <subcellularLocation>
        <location evidence="1">Cytoplasm</location>
    </subcellularLocation>
    <subcellularLocation>
        <location evidence="1">Nucleus</location>
        <location evidence="1">Nucleolus</location>
    </subcellularLocation>
    <text evidence="1">Shuttles between cytoplasm and nucleus/nucleolus.</text>
</comment>
<comment type="similarity">
    <text evidence="1">Belongs to the eIF-6 family.</text>
</comment>
<protein>
    <recommendedName>
        <fullName evidence="1">Eukaryotic translation initiation factor 6</fullName>
        <shortName evidence="1">eIF-6</shortName>
    </recommendedName>
</protein>
<reference key="1">
    <citation type="submission" date="1998-07" db="EMBL/GenBank/DDBJ databases">
        <authorList>
            <person name="Garnier F."/>
            <person name="Jackers P."/>
            <person name="Gaspar T."/>
            <person name="Castronovo V."/>
        </authorList>
    </citation>
    <scope>NUCLEOTIDE SEQUENCE [MRNA]</scope>
    <source>
        <tissue>Callus</tissue>
    </source>
</reference>
<name>IF6_BETVU</name>
<organism>
    <name type="scientific">Beta vulgaris</name>
    <name type="common">Sugar beet</name>
    <dbReference type="NCBI Taxonomy" id="161934"/>
    <lineage>
        <taxon>Eukaryota</taxon>
        <taxon>Viridiplantae</taxon>
        <taxon>Streptophyta</taxon>
        <taxon>Embryophyta</taxon>
        <taxon>Tracheophyta</taxon>
        <taxon>Spermatophyta</taxon>
        <taxon>Magnoliopsida</taxon>
        <taxon>eudicotyledons</taxon>
        <taxon>Gunneridae</taxon>
        <taxon>Pentapetalae</taxon>
        <taxon>Caryophyllales</taxon>
        <taxon>Chenopodiaceae</taxon>
        <taxon>Betoideae</taxon>
        <taxon>Beta</taxon>
    </lineage>
</organism>
<proteinExistence type="evidence at transcript level"/>
<accession>O81920</accession>
<evidence type="ECO:0000255" key="1">
    <source>
        <dbReference type="HAMAP-Rule" id="MF_03132"/>
    </source>
</evidence>
<sequence length="193" mass="20864">MATRLQFENNCEVGVFSKLTNAYCLVAIGGSENFYSTFETELADYIPVVKTSIAGTRIIGPNVCRNKNGLLVPHTTTDQELQHLRNCLPDSVVVQRIEEKLSALGNCIACNDYVALTHTDLDKETEELIADVLGVEVFGQTIAGNILVGSYCAITNKGGLVHPHTSIEDLDELSTLLQVPLVAGTVNRGSEVI</sequence>
<dbReference type="EMBL" id="AJ009737">
    <property type="protein sequence ID" value="CAA08809.1"/>
    <property type="molecule type" value="mRNA"/>
</dbReference>
<dbReference type="PIR" id="T14618">
    <property type="entry name" value="T14618"/>
</dbReference>
<dbReference type="SMR" id="O81920"/>
<dbReference type="GO" id="GO:0005737">
    <property type="term" value="C:cytoplasm"/>
    <property type="evidence" value="ECO:0007669"/>
    <property type="project" value="UniProtKB-SubCell"/>
</dbReference>
<dbReference type="GO" id="GO:0005730">
    <property type="term" value="C:nucleolus"/>
    <property type="evidence" value="ECO:0007669"/>
    <property type="project" value="UniProtKB-SubCell"/>
</dbReference>
<dbReference type="GO" id="GO:0043022">
    <property type="term" value="F:ribosome binding"/>
    <property type="evidence" value="ECO:0007669"/>
    <property type="project" value="InterPro"/>
</dbReference>
<dbReference type="GO" id="GO:0003743">
    <property type="term" value="F:translation initiation factor activity"/>
    <property type="evidence" value="ECO:0007669"/>
    <property type="project" value="UniProtKB-KW"/>
</dbReference>
<dbReference type="GO" id="GO:0042256">
    <property type="term" value="P:cytosolic ribosome assembly"/>
    <property type="evidence" value="ECO:0007669"/>
    <property type="project" value="InterPro"/>
</dbReference>
<dbReference type="CDD" id="cd00527">
    <property type="entry name" value="IF6"/>
    <property type="match status" value="1"/>
</dbReference>
<dbReference type="FunFam" id="3.75.10.10:FF:000001">
    <property type="entry name" value="Eukaryotic translation initiation factor 6"/>
    <property type="match status" value="1"/>
</dbReference>
<dbReference type="Gene3D" id="3.75.10.10">
    <property type="entry name" value="L-arginine/glycine Amidinotransferase, Chain A"/>
    <property type="match status" value="1"/>
</dbReference>
<dbReference type="HAMAP" id="MF_00032">
    <property type="entry name" value="eIF_6"/>
    <property type="match status" value="1"/>
</dbReference>
<dbReference type="InterPro" id="IPR002769">
    <property type="entry name" value="eIF6"/>
</dbReference>
<dbReference type="NCBIfam" id="TIGR00323">
    <property type="entry name" value="eIF-6"/>
    <property type="match status" value="1"/>
</dbReference>
<dbReference type="PANTHER" id="PTHR10784">
    <property type="entry name" value="TRANSLATION INITIATION FACTOR 6"/>
    <property type="match status" value="1"/>
</dbReference>
<dbReference type="Pfam" id="PF01912">
    <property type="entry name" value="eIF-6"/>
    <property type="match status" value="1"/>
</dbReference>
<dbReference type="PIRSF" id="PIRSF006413">
    <property type="entry name" value="IF-6"/>
    <property type="match status" value="1"/>
</dbReference>
<dbReference type="SMART" id="SM00654">
    <property type="entry name" value="eIF6"/>
    <property type="match status" value="1"/>
</dbReference>
<dbReference type="SUPFAM" id="SSF55909">
    <property type="entry name" value="Pentein"/>
    <property type="match status" value="1"/>
</dbReference>